<protein>
    <recommendedName>
        <fullName evidence="1">ATP-dependent Clp protease ATP-binding subunit ClpX</fullName>
    </recommendedName>
</protein>
<organism>
    <name type="scientific">Porphyromonas gingivalis (strain ATCC BAA-308 / W83)</name>
    <dbReference type="NCBI Taxonomy" id="242619"/>
    <lineage>
        <taxon>Bacteria</taxon>
        <taxon>Pseudomonadati</taxon>
        <taxon>Bacteroidota</taxon>
        <taxon>Bacteroidia</taxon>
        <taxon>Bacteroidales</taxon>
        <taxon>Porphyromonadaceae</taxon>
        <taxon>Porphyromonas</taxon>
    </lineage>
</organism>
<feature type="chain" id="PRO_0000160399" description="ATP-dependent Clp protease ATP-binding subunit ClpX">
    <location>
        <begin position="1"/>
        <end position="411"/>
    </location>
</feature>
<feature type="domain" description="ClpX-type ZB" evidence="2">
    <location>
        <begin position="1"/>
        <end position="51"/>
    </location>
</feature>
<feature type="binding site" evidence="2">
    <location>
        <position position="10"/>
    </location>
    <ligand>
        <name>Zn(2+)</name>
        <dbReference type="ChEBI" id="CHEBI:29105"/>
    </ligand>
</feature>
<feature type="binding site" evidence="2">
    <location>
        <position position="13"/>
    </location>
    <ligand>
        <name>Zn(2+)</name>
        <dbReference type="ChEBI" id="CHEBI:29105"/>
    </ligand>
</feature>
<feature type="binding site" evidence="2">
    <location>
        <position position="32"/>
    </location>
    <ligand>
        <name>Zn(2+)</name>
        <dbReference type="ChEBI" id="CHEBI:29105"/>
    </ligand>
</feature>
<feature type="binding site" evidence="2">
    <location>
        <position position="35"/>
    </location>
    <ligand>
        <name>Zn(2+)</name>
        <dbReference type="ChEBI" id="CHEBI:29105"/>
    </ligand>
</feature>
<feature type="binding site" evidence="1">
    <location>
        <begin position="119"/>
        <end position="126"/>
    </location>
    <ligand>
        <name>ATP</name>
        <dbReference type="ChEBI" id="CHEBI:30616"/>
    </ligand>
</feature>
<comment type="function">
    <text evidence="1">ATP-dependent specificity component of the Clp protease. It directs the protease to specific substrates. Can perform chaperone functions in the absence of ClpP.</text>
</comment>
<comment type="subunit">
    <text evidence="1">Component of the ClpX-ClpP complex. Forms a hexameric ring that, in the presence of ATP, binds to fourteen ClpP subunits assembled into a disk-like structure with a central cavity, resembling the structure of eukaryotic proteasomes.</text>
</comment>
<comment type="similarity">
    <text evidence="1">Belongs to the ClpX chaperone family.</text>
</comment>
<accession>Q7MX10</accession>
<gene>
    <name evidence="1" type="primary">clpX</name>
    <name type="ordered locus">PG_0417</name>
</gene>
<name>CLPX_PORGI</name>
<keyword id="KW-0067">ATP-binding</keyword>
<keyword id="KW-0143">Chaperone</keyword>
<keyword id="KW-0479">Metal-binding</keyword>
<keyword id="KW-0547">Nucleotide-binding</keyword>
<keyword id="KW-1185">Reference proteome</keyword>
<keyword id="KW-0862">Zinc</keyword>
<evidence type="ECO:0000255" key="1">
    <source>
        <dbReference type="HAMAP-Rule" id="MF_00175"/>
    </source>
</evidence>
<evidence type="ECO:0000255" key="2">
    <source>
        <dbReference type="PROSITE-ProRule" id="PRU01250"/>
    </source>
</evidence>
<dbReference type="EMBL" id="AE015924">
    <property type="protein sequence ID" value="AAQ65618.1"/>
    <property type="molecule type" value="Genomic_DNA"/>
</dbReference>
<dbReference type="RefSeq" id="WP_005873798.1">
    <property type="nucleotide sequence ID" value="NC_002950.2"/>
</dbReference>
<dbReference type="SMR" id="Q7MX10"/>
<dbReference type="STRING" id="242619.PG_0417"/>
<dbReference type="EnsemblBacteria" id="AAQ65618">
    <property type="protein sequence ID" value="AAQ65618"/>
    <property type="gene ID" value="PG_0417"/>
</dbReference>
<dbReference type="GeneID" id="29256727"/>
<dbReference type="KEGG" id="pgi:PG_0417"/>
<dbReference type="eggNOG" id="COG1219">
    <property type="taxonomic scope" value="Bacteria"/>
</dbReference>
<dbReference type="HOGENOM" id="CLU_014218_8_2_10"/>
<dbReference type="Proteomes" id="UP000000588">
    <property type="component" value="Chromosome"/>
</dbReference>
<dbReference type="GO" id="GO:0009376">
    <property type="term" value="C:HslUV protease complex"/>
    <property type="evidence" value="ECO:0007669"/>
    <property type="project" value="TreeGrafter"/>
</dbReference>
<dbReference type="GO" id="GO:0005524">
    <property type="term" value="F:ATP binding"/>
    <property type="evidence" value="ECO:0007669"/>
    <property type="project" value="UniProtKB-UniRule"/>
</dbReference>
<dbReference type="GO" id="GO:0016887">
    <property type="term" value="F:ATP hydrolysis activity"/>
    <property type="evidence" value="ECO:0007669"/>
    <property type="project" value="InterPro"/>
</dbReference>
<dbReference type="GO" id="GO:0140662">
    <property type="term" value="F:ATP-dependent protein folding chaperone"/>
    <property type="evidence" value="ECO:0007669"/>
    <property type="project" value="InterPro"/>
</dbReference>
<dbReference type="GO" id="GO:0046983">
    <property type="term" value="F:protein dimerization activity"/>
    <property type="evidence" value="ECO:0007669"/>
    <property type="project" value="InterPro"/>
</dbReference>
<dbReference type="GO" id="GO:0051082">
    <property type="term" value="F:unfolded protein binding"/>
    <property type="evidence" value="ECO:0007669"/>
    <property type="project" value="UniProtKB-UniRule"/>
</dbReference>
<dbReference type="GO" id="GO:0008270">
    <property type="term" value="F:zinc ion binding"/>
    <property type="evidence" value="ECO:0007669"/>
    <property type="project" value="InterPro"/>
</dbReference>
<dbReference type="GO" id="GO:0051301">
    <property type="term" value="P:cell division"/>
    <property type="evidence" value="ECO:0007669"/>
    <property type="project" value="TreeGrafter"/>
</dbReference>
<dbReference type="GO" id="GO:0051603">
    <property type="term" value="P:proteolysis involved in protein catabolic process"/>
    <property type="evidence" value="ECO:0007669"/>
    <property type="project" value="TreeGrafter"/>
</dbReference>
<dbReference type="CDD" id="cd19497">
    <property type="entry name" value="RecA-like_ClpX"/>
    <property type="match status" value="1"/>
</dbReference>
<dbReference type="FunFam" id="1.10.8.60:FF:000002">
    <property type="entry name" value="ATP-dependent Clp protease ATP-binding subunit ClpX"/>
    <property type="match status" value="1"/>
</dbReference>
<dbReference type="FunFam" id="3.40.50.300:FF:000005">
    <property type="entry name" value="ATP-dependent Clp protease ATP-binding subunit ClpX"/>
    <property type="match status" value="1"/>
</dbReference>
<dbReference type="Gene3D" id="1.10.8.60">
    <property type="match status" value="1"/>
</dbReference>
<dbReference type="Gene3D" id="6.20.220.10">
    <property type="entry name" value="ClpX chaperone, C4-type zinc finger domain"/>
    <property type="match status" value="1"/>
</dbReference>
<dbReference type="Gene3D" id="3.40.50.300">
    <property type="entry name" value="P-loop containing nucleotide triphosphate hydrolases"/>
    <property type="match status" value="1"/>
</dbReference>
<dbReference type="HAMAP" id="MF_00175">
    <property type="entry name" value="ClpX"/>
    <property type="match status" value="1"/>
</dbReference>
<dbReference type="InterPro" id="IPR003593">
    <property type="entry name" value="AAA+_ATPase"/>
</dbReference>
<dbReference type="InterPro" id="IPR050052">
    <property type="entry name" value="ATP-dep_Clp_protease_ClpX"/>
</dbReference>
<dbReference type="InterPro" id="IPR003959">
    <property type="entry name" value="ATPase_AAA_core"/>
</dbReference>
<dbReference type="InterPro" id="IPR019489">
    <property type="entry name" value="Clp_ATPase_C"/>
</dbReference>
<dbReference type="InterPro" id="IPR004487">
    <property type="entry name" value="Clp_protease_ATP-bd_su_ClpX"/>
</dbReference>
<dbReference type="InterPro" id="IPR046425">
    <property type="entry name" value="ClpX_bact"/>
</dbReference>
<dbReference type="InterPro" id="IPR027417">
    <property type="entry name" value="P-loop_NTPase"/>
</dbReference>
<dbReference type="InterPro" id="IPR010603">
    <property type="entry name" value="Znf_CppX_C4"/>
</dbReference>
<dbReference type="InterPro" id="IPR038366">
    <property type="entry name" value="Znf_CppX_C4_sf"/>
</dbReference>
<dbReference type="NCBIfam" id="TIGR00382">
    <property type="entry name" value="clpX"/>
    <property type="match status" value="1"/>
</dbReference>
<dbReference type="NCBIfam" id="NF003745">
    <property type="entry name" value="PRK05342.1"/>
    <property type="match status" value="1"/>
</dbReference>
<dbReference type="PANTHER" id="PTHR48102:SF7">
    <property type="entry name" value="ATP-DEPENDENT CLP PROTEASE ATP-BINDING SUBUNIT CLPX-LIKE, MITOCHONDRIAL"/>
    <property type="match status" value="1"/>
</dbReference>
<dbReference type="PANTHER" id="PTHR48102">
    <property type="entry name" value="ATP-DEPENDENT CLP PROTEASE ATP-BINDING SUBUNIT CLPX-LIKE, MITOCHONDRIAL-RELATED"/>
    <property type="match status" value="1"/>
</dbReference>
<dbReference type="Pfam" id="PF07724">
    <property type="entry name" value="AAA_2"/>
    <property type="match status" value="1"/>
</dbReference>
<dbReference type="Pfam" id="PF10431">
    <property type="entry name" value="ClpB_D2-small"/>
    <property type="match status" value="1"/>
</dbReference>
<dbReference type="Pfam" id="PF06689">
    <property type="entry name" value="zf-C4_ClpX"/>
    <property type="match status" value="1"/>
</dbReference>
<dbReference type="SMART" id="SM00382">
    <property type="entry name" value="AAA"/>
    <property type="match status" value="1"/>
</dbReference>
<dbReference type="SMART" id="SM01086">
    <property type="entry name" value="ClpB_D2-small"/>
    <property type="match status" value="1"/>
</dbReference>
<dbReference type="SMART" id="SM00994">
    <property type="entry name" value="zf-C4_ClpX"/>
    <property type="match status" value="1"/>
</dbReference>
<dbReference type="SUPFAM" id="SSF57716">
    <property type="entry name" value="Glucocorticoid receptor-like (DNA-binding domain)"/>
    <property type="match status" value="1"/>
</dbReference>
<dbReference type="SUPFAM" id="SSF52540">
    <property type="entry name" value="P-loop containing nucleoside triphosphate hydrolases"/>
    <property type="match status" value="1"/>
</dbReference>
<dbReference type="PROSITE" id="PS51902">
    <property type="entry name" value="CLPX_ZB"/>
    <property type="match status" value="1"/>
</dbReference>
<sequence length="411" mass="46212">MAKKKDEEYCSFCGMPRTQVNLMLEGVHAHICDECALRAGEVVREALQKFKSEETNNLKREDLPRPIEIKEFLDSYVIGQDDAKRFLSVAVYNHYKRLLQQEDSDGVEIEKSNIIMVGPTGTGKTLLARTIAKMLHVPFAVVDATVLTEAGYVGEDIESILTRLLQAADYDVKQAERGIVFIDEIDKIARKSDNPSITRDVSGEGVQQGLLKLLEGSIVNVPPQGGRKHPEQKMIPVDTRHILFVCAGAFDGIEKKIAQRLNTRVVGYTAGLQNRHIDRENMLRYIRPQDLKSFGLIPEIIGRLPILTHLEPLDRDALRNIMTEPKNAITKQYEKLFAMDGIKVSFTSDMLDFVVDKAIEFKLGARGLRSIVETIMMDAMFTMPSGKKKTLVVDKAYAEAHLNIDDLLQDQ</sequence>
<reference key="1">
    <citation type="journal article" date="2003" name="J. Bacteriol.">
        <title>Complete genome sequence of the oral pathogenic bacterium Porphyromonas gingivalis strain W83.</title>
        <authorList>
            <person name="Nelson K.E."/>
            <person name="Fleischmann R.D."/>
            <person name="DeBoy R.T."/>
            <person name="Paulsen I.T."/>
            <person name="Fouts D.E."/>
            <person name="Eisen J.A."/>
            <person name="Daugherty S.C."/>
            <person name="Dodson R.J."/>
            <person name="Durkin A.S."/>
            <person name="Gwinn M.L."/>
            <person name="Haft D.H."/>
            <person name="Kolonay J.F."/>
            <person name="Nelson W.C."/>
            <person name="Mason T.M."/>
            <person name="Tallon L."/>
            <person name="Gray J."/>
            <person name="Granger D."/>
            <person name="Tettelin H."/>
            <person name="Dong H."/>
            <person name="Galvin J.L."/>
            <person name="Duncan M.J."/>
            <person name="Dewhirst F.E."/>
            <person name="Fraser C.M."/>
        </authorList>
    </citation>
    <scope>NUCLEOTIDE SEQUENCE [LARGE SCALE GENOMIC DNA]</scope>
    <source>
        <strain>ATCC BAA-308 / W83</strain>
    </source>
</reference>
<proteinExistence type="inferred from homology"/>